<dbReference type="EC" id="3.6.4.13" evidence="1"/>
<dbReference type="EMBL" id="CP000931">
    <property type="protein sequence ID" value="ABZ78432.1"/>
    <property type="molecule type" value="Genomic_DNA"/>
</dbReference>
<dbReference type="RefSeq" id="WP_012278949.1">
    <property type="nucleotide sequence ID" value="NC_010334.1"/>
</dbReference>
<dbReference type="SMR" id="B0TJ29"/>
<dbReference type="STRING" id="458817.Shal_3892"/>
<dbReference type="KEGG" id="shl:Shal_3892"/>
<dbReference type="eggNOG" id="COG0513">
    <property type="taxonomic scope" value="Bacteria"/>
</dbReference>
<dbReference type="HOGENOM" id="CLU_003041_28_3_6"/>
<dbReference type="OrthoDB" id="9805696at2"/>
<dbReference type="Proteomes" id="UP000001317">
    <property type="component" value="Chromosome"/>
</dbReference>
<dbReference type="GO" id="GO:0005829">
    <property type="term" value="C:cytosol"/>
    <property type="evidence" value="ECO:0007669"/>
    <property type="project" value="TreeGrafter"/>
</dbReference>
<dbReference type="GO" id="GO:0005524">
    <property type="term" value="F:ATP binding"/>
    <property type="evidence" value="ECO:0007669"/>
    <property type="project" value="UniProtKB-UniRule"/>
</dbReference>
<dbReference type="GO" id="GO:0016887">
    <property type="term" value="F:ATP hydrolysis activity"/>
    <property type="evidence" value="ECO:0007669"/>
    <property type="project" value="RHEA"/>
</dbReference>
<dbReference type="GO" id="GO:0003723">
    <property type="term" value="F:RNA binding"/>
    <property type="evidence" value="ECO:0007669"/>
    <property type="project" value="UniProtKB-UniRule"/>
</dbReference>
<dbReference type="GO" id="GO:0003724">
    <property type="term" value="F:RNA helicase activity"/>
    <property type="evidence" value="ECO:0007669"/>
    <property type="project" value="UniProtKB-UniRule"/>
</dbReference>
<dbReference type="GO" id="GO:0006401">
    <property type="term" value="P:RNA catabolic process"/>
    <property type="evidence" value="ECO:0007669"/>
    <property type="project" value="UniProtKB-UniRule"/>
</dbReference>
<dbReference type="CDD" id="cd00268">
    <property type="entry name" value="DEADc"/>
    <property type="match status" value="1"/>
</dbReference>
<dbReference type="CDD" id="cd18787">
    <property type="entry name" value="SF2_C_DEAD"/>
    <property type="match status" value="1"/>
</dbReference>
<dbReference type="FunFam" id="3.40.50.300:FF:000312">
    <property type="entry name" value="ATP-dependent RNA helicase RhlB"/>
    <property type="match status" value="1"/>
</dbReference>
<dbReference type="Gene3D" id="3.40.50.300">
    <property type="entry name" value="P-loop containing nucleotide triphosphate hydrolases"/>
    <property type="match status" value="2"/>
</dbReference>
<dbReference type="HAMAP" id="MF_00661">
    <property type="entry name" value="DEAD_helicase_RhlB"/>
    <property type="match status" value="1"/>
</dbReference>
<dbReference type="InterPro" id="IPR011545">
    <property type="entry name" value="DEAD/DEAH_box_helicase_dom"/>
</dbReference>
<dbReference type="InterPro" id="IPR050079">
    <property type="entry name" value="DEAD_box_RNA_helicase"/>
</dbReference>
<dbReference type="InterPro" id="IPR014001">
    <property type="entry name" value="Helicase_ATP-bd"/>
</dbReference>
<dbReference type="InterPro" id="IPR001650">
    <property type="entry name" value="Helicase_C-like"/>
</dbReference>
<dbReference type="InterPro" id="IPR027417">
    <property type="entry name" value="P-loop_NTPase"/>
</dbReference>
<dbReference type="InterPro" id="IPR000629">
    <property type="entry name" value="RNA-helicase_DEAD-box_CS"/>
</dbReference>
<dbReference type="InterPro" id="IPR023554">
    <property type="entry name" value="RNA_helicase_ATP-dep_RhlB"/>
</dbReference>
<dbReference type="InterPro" id="IPR014014">
    <property type="entry name" value="RNA_helicase_DEAD_Q_motif"/>
</dbReference>
<dbReference type="NCBIfam" id="NF003419">
    <property type="entry name" value="PRK04837.1"/>
    <property type="match status" value="1"/>
</dbReference>
<dbReference type="PANTHER" id="PTHR47959:SF10">
    <property type="entry name" value="ATP-DEPENDENT RNA HELICASE RHLB"/>
    <property type="match status" value="1"/>
</dbReference>
<dbReference type="PANTHER" id="PTHR47959">
    <property type="entry name" value="ATP-DEPENDENT RNA HELICASE RHLE-RELATED"/>
    <property type="match status" value="1"/>
</dbReference>
<dbReference type="Pfam" id="PF00270">
    <property type="entry name" value="DEAD"/>
    <property type="match status" value="1"/>
</dbReference>
<dbReference type="Pfam" id="PF00271">
    <property type="entry name" value="Helicase_C"/>
    <property type="match status" value="1"/>
</dbReference>
<dbReference type="SMART" id="SM00487">
    <property type="entry name" value="DEXDc"/>
    <property type="match status" value="1"/>
</dbReference>
<dbReference type="SMART" id="SM00490">
    <property type="entry name" value="HELICc"/>
    <property type="match status" value="1"/>
</dbReference>
<dbReference type="SUPFAM" id="SSF52540">
    <property type="entry name" value="P-loop containing nucleoside triphosphate hydrolases"/>
    <property type="match status" value="1"/>
</dbReference>
<dbReference type="PROSITE" id="PS00039">
    <property type="entry name" value="DEAD_ATP_HELICASE"/>
    <property type="match status" value="1"/>
</dbReference>
<dbReference type="PROSITE" id="PS51192">
    <property type="entry name" value="HELICASE_ATP_BIND_1"/>
    <property type="match status" value="1"/>
</dbReference>
<dbReference type="PROSITE" id="PS51194">
    <property type="entry name" value="HELICASE_CTER"/>
    <property type="match status" value="1"/>
</dbReference>
<dbReference type="PROSITE" id="PS51195">
    <property type="entry name" value="Q_MOTIF"/>
    <property type="match status" value="1"/>
</dbReference>
<evidence type="ECO:0000255" key="1">
    <source>
        <dbReference type="HAMAP-Rule" id="MF_00661"/>
    </source>
</evidence>
<evidence type="ECO:0000256" key="2">
    <source>
        <dbReference type="SAM" id="MobiDB-lite"/>
    </source>
</evidence>
<reference key="1">
    <citation type="submission" date="2008-01" db="EMBL/GenBank/DDBJ databases">
        <title>Complete sequence of Shewanella halifaxensis HAW-EB4.</title>
        <authorList>
            <consortium name="US DOE Joint Genome Institute"/>
            <person name="Copeland A."/>
            <person name="Lucas S."/>
            <person name="Lapidus A."/>
            <person name="Glavina del Rio T."/>
            <person name="Dalin E."/>
            <person name="Tice H."/>
            <person name="Bruce D."/>
            <person name="Goodwin L."/>
            <person name="Pitluck S."/>
            <person name="Sims D."/>
            <person name="Brettin T."/>
            <person name="Detter J.C."/>
            <person name="Han C."/>
            <person name="Kuske C.R."/>
            <person name="Schmutz J."/>
            <person name="Larimer F."/>
            <person name="Land M."/>
            <person name="Hauser L."/>
            <person name="Kyrpides N."/>
            <person name="Kim E."/>
            <person name="Zhao J.-S."/>
            <person name="Richardson P."/>
        </authorList>
    </citation>
    <scope>NUCLEOTIDE SEQUENCE [LARGE SCALE GENOMIC DNA]</scope>
    <source>
        <strain>HAW-EB4</strain>
    </source>
</reference>
<sequence length="436" mass="48992">MSDTHLSTQKFADFPLHKEVHQALNEAGFEFCTPIQALSLPILLEKKDIAGQAQTGTGKTLAFLVATFNHLLSTPIPAERQLNQPRAIIMAPTRELAIQIAKDANLLAKHTGLKVGIVYGGEGYEVQRKVLDKGVDILIGTTGRIIDYVRQGVINVSCIQAVVLDEADRMFDLGFIKDIRFLFRRMPDAKSRLNMLFSATLSMKVQELAYDHMNEPEKVEIAPNEKTSKNIKEEIFYPSMEEKMPLLLSLLEEDWPEKAIVFSNTKHSCEKVWSWLEGDGHRAGLLTGDVPQKKRLRILEQFTKGEIDILVATDVAARGLHIADVSHVYNYDLPDDCEDYVHRIGRTGRAGQKGISVSFACEEYALNLPAIESYIQHSIPVTSYDSDALLDDIPPPVRIHRKPSTHTRNTRDRGASRPQGGQRSGPRRHDRTRRHS</sequence>
<name>RHLB_SHEHH</name>
<proteinExistence type="inferred from homology"/>
<protein>
    <recommendedName>
        <fullName evidence="1">ATP-dependent RNA helicase RhlB</fullName>
        <ecNumber evidence="1">3.6.4.13</ecNumber>
    </recommendedName>
</protein>
<organism>
    <name type="scientific">Shewanella halifaxensis (strain HAW-EB4)</name>
    <dbReference type="NCBI Taxonomy" id="458817"/>
    <lineage>
        <taxon>Bacteria</taxon>
        <taxon>Pseudomonadati</taxon>
        <taxon>Pseudomonadota</taxon>
        <taxon>Gammaproteobacteria</taxon>
        <taxon>Alteromonadales</taxon>
        <taxon>Shewanellaceae</taxon>
        <taxon>Shewanella</taxon>
    </lineage>
</organism>
<gene>
    <name evidence="1" type="primary">rhlB</name>
    <name type="ordered locus">Shal_3892</name>
</gene>
<accession>B0TJ29</accession>
<feature type="chain" id="PRO_1000082862" description="ATP-dependent RNA helicase RhlB">
    <location>
        <begin position="1"/>
        <end position="436"/>
    </location>
</feature>
<feature type="domain" description="Helicase ATP-binding" evidence="1">
    <location>
        <begin position="40"/>
        <end position="219"/>
    </location>
</feature>
<feature type="domain" description="Helicase C-terminal" evidence="1">
    <location>
        <begin position="243"/>
        <end position="390"/>
    </location>
</feature>
<feature type="region of interest" description="Disordered" evidence="2">
    <location>
        <begin position="392"/>
        <end position="436"/>
    </location>
</feature>
<feature type="short sequence motif" description="Q motif">
    <location>
        <begin position="9"/>
        <end position="37"/>
    </location>
</feature>
<feature type="short sequence motif" description="DEAD box">
    <location>
        <begin position="165"/>
        <end position="168"/>
    </location>
</feature>
<feature type="compositionally biased region" description="Basic residues" evidence="2">
    <location>
        <begin position="425"/>
        <end position="436"/>
    </location>
</feature>
<feature type="binding site" evidence="1">
    <location>
        <begin position="53"/>
        <end position="60"/>
    </location>
    <ligand>
        <name>ATP</name>
        <dbReference type="ChEBI" id="CHEBI:30616"/>
    </ligand>
</feature>
<keyword id="KW-0067">ATP-binding</keyword>
<keyword id="KW-0963">Cytoplasm</keyword>
<keyword id="KW-0347">Helicase</keyword>
<keyword id="KW-0378">Hydrolase</keyword>
<keyword id="KW-0547">Nucleotide-binding</keyword>
<keyword id="KW-0694">RNA-binding</keyword>
<comment type="function">
    <text evidence="1">DEAD-box RNA helicase involved in RNA degradation. Has RNA-dependent ATPase activity and unwinds double-stranded RNA.</text>
</comment>
<comment type="catalytic activity">
    <reaction evidence="1">
        <text>ATP + H2O = ADP + phosphate + H(+)</text>
        <dbReference type="Rhea" id="RHEA:13065"/>
        <dbReference type="ChEBI" id="CHEBI:15377"/>
        <dbReference type="ChEBI" id="CHEBI:15378"/>
        <dbReference type="ChEBI" id="CHEBI:30616"/>
        <dbReference type="ChEBI" id="CHEBI:43474"/>
        <dbReference type="ChEBI" id="CHEBI:456216"/>
        <dbReference type="EC" id="3.6.4.13"/>
    </reaction>
</comment>
<comment type="subunit">
    <text evidence="1">Component of the RNA degradosome, which is a multiprotein complex involved in RNA processing and mRNA degradation.</text>
</comment>
<comment type="subcellular location">
    <subcellularLocation>
        <location evidence="1">Cytoplasm</location>
    </subcellularLocation>
</comment>
<comment type="similarity">
    <text evidence="1">Belongs to the DEAD box helicase family. RhlB subfamily.</text>
</comment>